<comment type="function">
    <text evidence="1">Plays a major role in protein secretion by helping the post-translocational extracellular folding of several secreted proteins.</text>
</comment>
<comment type="catalytic activity">
    <reaction>
        <text>[protein]-peptidylproline (omega=180) = [protein]-peptidylproline (omega=0)</text>
        <dbReference type="Rhea" id="RHEA:16237"/>
        <dbReference type="Rhea" id="RHEA-COMP:10747"/>
        <dbReference type="Rhea" id="RHEA-COMP:10748"/>
        <dbReference type="ChEBI" id="CHEBI:83833"/>
        <dbReference type="ChEBI" id="CHEBI:83834"/>
        <dbReference type="EC" id="5.2.1.8"/>
    </reaction>
</comment>
<comment type="subcellular location">
    <subcellularLocation>
        <location evidence="3">Cell membrane</location>
        <topology evidence="3">Lipid-anchor</topology>
    </subcellularLocation>
</comment>
<comment type="similarity">
    <text evidence="3">Belongs to the PrsA family.</text>
</comment>
<keyword id="KW-1003">Cell membrane</keyword>
<keyword id="KW-0413">Isomerase</keyword>
<keyword id="KW-0449">Lipoprotein</keyword>
<keyword id="KW-0472">Membrane</keyword>
<keyword id="KW-0564">Palmitate</keyword>
<keyword id="KW-0697">Rotamase</keyword>
<keyword id="KW-0732">Signal</keyword>
<gene>
    <name type="primary">prsA2</name>
    <name type="ordered locus">lin2322</name>
</gene>
<proteinExistence type="inferred from homology"/>
<feature type="signal peptide" evidence="2">
    <location>
        <begin position="1"/>
        <end position="20"/>
    </location>
</feature>
<feature type="chain" id="PRO_0000029310" description="Foldase protein PrsA 2">
    <location>
        <begin position="21"/>
        <end position="291"/>
    </location>
</feature>
<feature type="domain" description="PpiC">
    <location>
        <begin position="135"/>
        <end position="226"/>
    </location>
</feature>
<feature type="lipid moiety-binding region" description="N-palmitoyl cysteine" evidence="2">
    <location>
        <position position="21"/>
    </location>
</feature>
<feature type="lipid moiety-binding region" description="S-diacylglycerol cysteine" evidence="2">
    <location>
        <position position="21"/>
    </location>
</feature>
<name>PRSA2_LISIN</name>
<reference key="1">
    <citation type="journal article" date="2001" name="Science">
        <title>Comparative genomics of Listeria species.</title>
        <authorList>
            <person name="Glaser P."/>
            <person name="Frangeul L."/>
            <person name="Buchrieser C."/>
            <person name="Rusniok C."/>
            <person name="Amend A."/>
            <person name="Baquero F."/>
            <person name="Berche P."/>
            <person name="Bloecker H."/>
            <person name="Brandt P."/>
            <person name="Chakraborty T."/>
            <person name="Charbit A."/>
            <person name="Chetouani F."/>
            <person name="Couve E."/>
            <person name="de Daruvar A."/>
            <person name="Dehoux P."/>
            <person name="Domann E."/>
            <person name="Dominguez-Bernal G."/>
            <person name="Duchaud E."/>
            <person name="Durant L."/>
            <person name="Dussurget O."/>
            <person name="Entian K.-D."/>
            <person name="Fsihi H."/>
            <person name="Garcia-del Portillo F."/>
            <person name="Garrido P."/>
            <person name="Gautier L."/>
            <person name="Goebel W."/>
            <person name="Gomez-Lopez N."/>
            <person name="Hain T."/>
            <person name="Hauf J."/>
            <person name="Jackson D."/>
            <person name="Jones L.-M."/>
            <person name="Kaerst U."/>
            <person name="Kreft J."/>
            <person name="Kuhn M."/>
            <person name="Kunst F."/>
            <person name="Kurapkat G."/>
            <person name="Madueno E."/>
            <person name="Maitournam A."/>
            <person name="Mata Vicente J."/>
            <person name="Ng E."/>
            <person name="Nedjari H."/>
            <person name="Nordsiek G."/>
            <person name="Novella S."/>
            <person name="de Pablos B."/>
            <person name="Perez-Diaz J.-C."/>
            <person name="Purcell R."/>
            <person name="Remmel B."/>
            <person name="Rose M."/>
            <person name="Schlueter T."/>
            <person name="Simoes N."/>
            <person name="Tierrez A."/>
            <person name="Vazquez-Boland J.-A."/>
            <person name="Voss H."/>
            <person name="Wehland J."/>
            <person name="Cossart P."/>
        </authorList>
    </citation>
    <scope>NUCLEOTIDE SEQUENCE [LARGE SCALE GENOMIC DNA]</scope>
    <source>
        <strain>ATCC BAA-680 / CLIP 11262</strain>
    </source>
</reference>
<accession>Q929F4</accession>
<organism>
    <name type="scientific">Listeria innocua serovar 6a (strain ATCC BAA-680 / CLIP 11262)</name>
    <dbReference type="NCBI Taxonomy" id="272626"/>
    <lineage>
        <taxon>Bacteria</taxon>
        <taxon>Bacillati</taxon>
        <taxon>Bacillota</taxon>
        <taxon>Bacilli</taxon>
        <taxon>Bacillales</taxon>
        <taxon>Listeriaceae</taxon>
        <taxon>Listeria</taxon>
    </lineage>
</organism>
<sequence length="291" mass="32360">MKKKLILGLVMMMALFSLAACGGGGNVVKTDSGDVTQDELYDAMKDKYGSEFVQQLTFEKILGDKYKVSDEDVDKKFKEYKSQYGDQFSAVLAQSGLTEKSFKSQLKYNLLVQKATEANADTSDKALKEYYKTWQPDITVSHILVADENKAKEVEQKLKDGAKFADLAKEYSTDTATKENGGQLAPFGSGKMDPAFEKAAYALKNKGDISAPVKTQYGYHIIQMDKPATKTTFDKDKKAVKEAYLASQLTTENMQKTLKKEYKDANVKVEDKDLKDAFKDFDGSASKDSSK</sequence>
<dbReference type="EC" id="5.2.1.8"/>
<dbReference type="EMBL" id="AL596171">
    <property type="protein sequence ID" value="CAC97550.1"/>
    <property type="molecule type" value="Genomic_DNA"/>
</dbReference>
<dbReference type="PIR" id="AF1722">
    <property type="entry name" value="AF1722"/>
</dbReference>
<dbReference type="RefSeq" id="WP_003769842.1">
    <property type="nucleotide sequence ID" value="NC_003212.1"/>
</dbReference>
<dbReference type="SMR" id="Q929F4"/>
<dbReference type="STRING" id="272626.gene:17566684"/>
<dbReference type="GeneID" id="93235667"/>
<dbReference type="KEGG" id="lin:lin2322"/>
<dbReference type="eggNOG" id="COG0760">
    <property type="taxonomic scope" value="Bacteria"/>
</dbReference>
<dbReference type="HOGENOM" id="CLU_034646_6_1_9"/>
<dbReference type="OrthoDB" id="14196at2"/>
<dbReference type="Proteomes" id="UP000002513">
    <property type="component" value="Chromosome"/>
</dbReference>
<dbReference type="GO" id="GO:0005886">
    <property type="term" value="C:plasma membrane"/>
    <property type="evidence" value="ECO:0007669"/>
    <property type="project" value="UniProtKB-SubCell"/>
</dbReference>
<dbReference type="GO" id="GO:0003755">
    <property type="term" value="F:peptidyl-prolyl cis-trans isomerase activity"/>
    <property type="evidence" value="ECO:0007669"/>
    <property type="project" value="UniProtKB-UniRule"/>
</dbReference>
<dbReference type="GO" id="GO:0006457">
    <property type="term" value="P:protein folding"/>
    <property type="evidence" value="ECO:0007669"/>
    <property type="project" value="UniProtKB-UniRule"/>
</dbReference>
<dbReference type="Gene3D" id="3.10.50.40">
    <property type="match status" value="1"/>
</dbReference>
<dbReference type="Gene3D" id="1.10.4030.10">
    <property type="entry name" value="Porin chaperone SurA, peptide-binding domain"/>
    <property type="match status" value="1"/>
</dbReference>
<dbReference type="HAMAP" id="MF_01145">
    <property type="entry name" value="Foldase_PrsA"/>
    <property type="match status" value="1"/>
</dbReference>
<dbReference type="InterPro" id="IPR023059">
    <property type="entry name" value="Foldase_PrsA"/>
</dbReference>
<dbReference type="InterPro" id="IPR046357">
    <property type="entry name" value="PPIase_dom_sf"/>
</dbReference>
<dbReference type="InterPro" id="IPR000297">
    <property type="entry name" value="PPIase_PpiC"/>
</dbReference>
<dbReference type="InterPro" id="IPR050245">
    <property type="entry name" value="PrsA_foldase"/>
</dbReference>
<dbReference type="InterPro" id="IPR027304">
    <property type="entry name" value="Trigger_fact/SurA_dom_sf"/>
</dbReference>
<dbReference type="PANTHER" id="PTHR47245:SF1">
    <property type="entry name" value="FOLDASE PROTEIN PRSA"/>
    <property type="match status" value="1"/>
</dbReference>
<dbReference type="PANTHER" id="PTHR47245">
    <property type="entry name" value="PEPTIDYLPROLYL ISOMERASE"/>
    <property type="match status" value="1"/>
</dbReference>
<dbReference type="Pfam" id="PF13616">
    <property type="entry name" value="Rotamase_3"/>
    <property type="match status" value="1"/>
</dbReference>
<dbReference type="SUPFAM" id="SSF54534">
    <property type="entry name" value="FKBP-like"/>
    <property type="match status" value="1"/>
</dbReference>
<dbReference type="SUPFAM" id="SSF109998">
    <property type="entry name" value="Triger factor/SurA peptide-binding domain-like"/>
    <property type="match status" value="1"/>
</dbReference>
<dbReference type="PROSITE" id="PS50198">
    <property type="entry name" value="PPIC_PPIASE_2"/>
    <property type="match status" value="1"/>
</dbReference>
<dbReference type="PROSITE" id="PS51257">
    <property type="entry name" value="PROKAR_LIPOPROTEIN"/>
    <property type="match status" value="1"/>
</dbReference>
<evidence type="ECO:0000250" key="1"/>
<evidence type="ECO:0000255" key="2"/>
<evidence type="ECO:0000305" key="3"/>
<protein>
    <recommendedName>
        <fullName>Foldase protein PrsA 2</fullName>
        <ecNumber>5.2.1.8</ecNumber>
    </recommendedName>
</protein>